<reference key="1">
    <citation type="journal article" date="1999" name="Microbiology">
        <title>Cytochrome c550 is an essential component of the quinoprotein ethanol oxidation system in Pseudomonas aeruginosa: cloning and sequencing of the genes encoding cytochrome c550 and an adjacent acetaldehyde dehydrogenase.</title>
        <authorList>
            <person name="Schobert M."/>
            <person name="Goerisch H."/>
        </authorList>
    </citation>
    <scope>NUCLEOTIDE SEQUENCE [GENOMIC DNA]</scope>
    <source>
        <strain>ATCC 17933</strain>
    </source>
</reference>
<reference key="2">
    <citation type="journal article" date="2000" name="Nature">
        <title>Complete genome sequence of Pseudomonas aeruginosa PAO1, an opportunistic pathogen.</title>
        <authorList>
            <person name="Stover C.K."/>
            <person name="Pham X.-Q.T."/>
            <person name="Erwin A.L."/>
            <person name="Mizoguchi S.D."/>
            <person name="Warrener P."/>
            <person name="Hickey M.J."/>
            <person name="Brinkman F.S.L."/>
            <person name="Hufnagle W.O."/>
            <person name="Kowalik D.J."/>
            <person name="Lagrou M."/>
            <person name="Garber R.L."/>
            <person name="Goltry L."/>
            <person name="Tolentino E."/>
            <person name="Westbrock-Wadman S."/>
            <person name="Yuan Y."/>
            <person name="Brody L.L."/>
            <person name="Coulter S.N."/>
            <person name="Folger K.R."/>
            <person name="Kas A."/>
            <person name="Larbig K."/>
            <person name="Lim R.M."/>
            <person name="Smith K.A."/>
            <person name="Spencer D.H."/>
            <person name="Wong G.K.-S."/>
            <person name="Wu Z."/>
            <person name="Paulsen I.T."/>
            <person name="Reizer J."/>
            <person name="Saier M.H. Jr."/>
            <person name="Hancock R.E.W."/>
            <person name="Lory S."/>
            <person name="Olson M.V."/>
        </authorList>
    </citation>
    <scope>NUCLEOTIDE SEQUENCE [LARGE SCALE GENOMIC DNA]</scope>
    <source>
        <strain>ATCC 15692 / DSM 22644 / CIP 104116 / JCM 14847 / LMG 12228 / 1C / PRS 101 / PAO1</strain>
    </source>
</reference>
<keyword id="KW-0884">PQQ biosynthesis</keyword>
<keyword id="KW-1185">Reference proteome</keyword>
<gene>
    <name type="primary">pqqA</name>
    <name type="ordered locus">PA1985</name>
</gene>
<evidence type="ECO:0000250" key="1"/>
<evidence type="ECO:0000305" key="2"/>
<dbReference type="EMBL" id="AF068264">
    <property type="protein sequence ID" value="AAC79660.1"/>
    <property type="molecule type" value="Genomic_DNA"/>
</dbReference>
<dbReference type="EMBL" id="AE004091">
    <property type="protein sequence ID" value="AAG05373.1"/>
    <property type="molecule type" value="Genomic_DNA"/>
</dbReference>
<dbReference type="PIR" id="A83397">
    <property type="entry name" value="A83397"/>
</dbReference>
<dbReference type="RefSeq" id="NP_250675.1">
    <property type="nucleotide sequence ID" value="NC_002516.2"/>
</dbReference>
<dbReference type="RefSeq" id="WP_003106462.1">
    <property type="nucleotide sequence ID" value="NZ_QZGE01000026.1"/>
</dbReference>
<dbReference type="STRING" id="208964.PA1985"/>
<dbReference type="PaxDb" id="208964-PA1985"/>
<dbReference type="DNASU" id="880480"/>
<dbReference type="GeneID" id="79913893"/>
<dbReference type="GeneID" id="880480"/>
<dbReference type="KEGG" id="pae:PA1985"/>
<dbReference type="PATRIC" id="fig|208964.12.peg.2069"/>
<dbReference type="PseudoCAP" id="PA1985"/>
<dbReference type="HOGENOM" id="CLU_219131_1_0_6"/>
<dbReference type="InParanoid" id="Q9ZAA0"/>
<dbReference type="PhylomeDB" id="Q9ZAA0"/>
<dbReference type="BioCyc" id="PAER208964:G1FZ6-2023-MONOMER"/>
<dbReference type="UniPathway" id="UPA00539"/>
<dbReference type="Proteomes" id="UP000002438">
    <property type="component" value="Chromosome"/>
</dbReference>
<dbReference type="GO" id="GO:0018189">
    <property type="term" value="P:pyrroloquinoline quinone biosynthetic process"/>
    <property type="evidence" value="ECO:0007669"/>
    <property type="project" value="UniProtKB-UniRule"/>
</dbReference>
<dbReference type="HAMAP" id="MF_00656">
    <property type="entry name" value="PQQ_syn_PqqA"/>
    <property type="match status" value="1"/>
</dbReference>
<dbReference type="InterPro" id="IPR011725">
    <property type="entry name" value="PQQ_synth_PqqA"/>
</dbReference>
<dbReference type="NCBIfam" id="TIGR02107">
    <property type="entry name" value="PQQ_syn_pqqA"/>
    <property type="match status" value="1"/>
</dbReference>
<dbReference type="Pfam" id="PF08042">
    <property type="entry name" value="PqqA"/>
    <property type="match status" value="1"/>
</dbReference>
<name>PQQA_PSEAE</name>
<feature type="chain" id="PRO_0000220313" description="Coenzyme PQQ synthesis protein A">
    <location>
        <begin position="1"/>
        <end position="23"/>
    </location>
</feature>
<feature type="cross-link" description="Pyrroloquinoline quinone (Glu-Tyr)" evidence="1">
    <location>
        <begin position="15"/>
        <end position="19"/>
    </location>
</feature>
<accession>Q9ZAA0</accession>
<protein>
    <recommendedName>
        <fullName>Coenzyme PQQ synthesis protein A</fullName>
    </recommendedName>
    <alternativeName>
        <fullName>Pyrroloquinoline quinone biosynthesis protein A</fullName>
    </alternativeName>
</protein>
<proteinExistence type="inferred from homology"/>
<comment type="function">
    <text evidence="1">Required for coenzyme pyrroloquinoline quinone (PQQ) biosynthesis. PQQ is probably formed by cross-linking a specific glutamate to a specific tyrosine residue and excising these residues from the peptide (By similarity).</text>
</comment>
<comment type="pathway">
    <text>Cofactor biosynthesis; pyrroloquinoline quinone biosynthesis.</text>
</comment>
<comment type="similarity">
    <text evidence="2">Belongs to the PqqA family.</text>
</comment>
<organism>
    <name type="scientific">Pseudomonas aeruginosa (strain ATCC 15692 / DSM 22644 / CIP 104116 / JCM 14847 / LMG 12228 / 1C / PRS 101 / PAO1)</name>
    <dbReference type="NCBI Taxonomy" id="208964"/>
    <lineage>
        <taxon>Bacteria</taxon>
        <taxon>Pseudomonadati</taxon>
        <taxon>Pseudomonadota</taxon>
        <taxon>Gammaproteobacteria</taxon>
        <taxon>Pseudomonadales</taxon>
        <taxon>Pseudomonadaceae</taxon>
        <taxon>Pseudomonas</taxon>
    </lineage>
</organism>
<sequence length="23" mass="2793">MWTKPSFTDLRLGFEVTLYFANR</sequence>